<dbReference type="EC" id="2.1.1.257" evidence="1"/>
<dbReference type="EMBL" id="CP000742">
    <property type="protein sequence ID" value="ABR54127.1"/>
    <property type="molecule type" value="Genomic_DNA"/>
</dbReference>
<dbReference type="RefSeq" id="WP_011972031.1">
    <property type="nucleotide sequence ID" value="NC_009634.1"/>
</dbReference>
<dbReference type="SMR" id="A6UNQ5"/>
<dbReference type="STRING" id="406327.Mevan_0217"/>
<dbReference type="GeneID" id="5325012"/>
<dbReference type="KEGG" id="mvn:Mevan_0217"/>
<dbReference type="eggNOG" id="arCOG01239">
    <property type="taxonomic scope" value="Archaea"/>
</dbReference>
<dbReference type="HOGENOM" id="CLU_107018_0_0_2"/>
<dbReference type="OrthoDB" id="27492at2157"/>
<dbReference type="Proteomes" id="UP000001107">
    <property type="component" value="Chromosome"/>
</dbReference>
<dbReference type="GO" id="GO:0005737">
    <property type="term" value="C:cytoplasm"/>
    <property type="evidence" value="ECO:0007669"/>
    <property type="project" value="UniProtKB-SubCell"/>
</dbReference>
<dbReference type="GO" id="GO:0008757">
    <property type="term" value="F:S-adenosylmethionine-dependent methyltransferase activity"/>
    <property type="evidence" value="ECO:0007669"/>
    <property type="project" value="UniProtKB-UniRule"/>
</dbReference>
<dbReference type="GO" id="GO:0008175">
    <property type="term" value="F:tRNA methyltransferase activity"/>
    <property type="evidence" value="ECO:0007669"/>
    <property type="project" value="UniProtKB-UniRule"/>
</dbReference>
<dbReference type="GO" id="GO:0030488">
    <property type="term" value="P:tRNA methylation"/>
    <property type="evidence" value="ECO:0007669"/>
    <property type="project" value="UniProtKB-UniRule"/>
</dbReference>
<dbReference type="CDD" id="cd18087">
    <property type="entry name" value="TrmY-like"/>
    <property type="match status" value="1"/>
</dbReference>
<dbReference type="Gene3D" id="3.40.1280.10">
    <property type="match status" value="1"/>
</dbReference>
<dbReference type="HAMAP" id="MF_00587">
    <property type="entry name" value="tRNA_methyltr_TrmY"/>
    <property type="match status" value="1"/>
</dbReference>
<dbReference type="InterPro" id="IPR029028">
    <property type="entry name" value="Alpha/beta_knot_MTases"/>
</dbReference>
<dbReference type="InterPro" id="IPR007158">
    <property type="entry name" value="TrmY"/>
</dbReference>
<dbReference type="InterPro" id="IPR029026">
    <property type="entry name" value="tRNA_m1G_MTases_N"/>
</dbReference>
<dbReference type="NCBIfam" id="NF002560">
    <property type="entry name" value="PRK02135.1"/>
    <property type="match status" value="1"/>
</dbReference>
<dbReference type="PANTHER" id="PTHR40703">
    <property type="entry name" value="TRNA (PSEUDOURIDINE(54)-N(1))-METHYLTRANSFERASE"/>
    <property type="match status" value="1"/>
</dbReference>
<dbReference type="PANTHER" id="PTHR40703:SF1">
    <property type="entry name" value="TRNA (PSEUDOURIDINE(54)-N(1))-METHYLTRANSFERASE"/>
    <property type="match status" value="1"/>
</dbReference>
<dbReference type="Pfam" id="PF04013">
    <property type="entry name" value="Methyltrn_RNA_2"/>
    <property type="match status" value="1"/>
</dbReference>
<dbReference type="SUPFAM" id="SSF75217">
    <property type="entry name" value="alpha/beta knot"/>
    <property type="match status" value="1"/>
</dbReference>
<keyword id="KW-0963">Cytoplasm</keyword>
<keyword id="KW-0489">Methyltransferase</keyword>
<keyword id="KW-0949">S-adenosyl-L-methionine</keyword>
<keyword id="KW-0808">Transferase</keyword>
<keyword id="KW-0819">tRNA processing</keyword>
<organism>
    <name type="scientific">Methanococcus vannielii (strain ATCC 35089 / DSM 1224 / JCM 13029 / OCM 148 / SB)</name>
    <dbReference type="NCBI Taxonomy" id="406327"/>
    <lineage>
        <taxon>Archaea</taxon>
        <taxon>Methanobacteriati</taxon>
        <taxon>Methanobacteriota</taxon>
        <taxon>Methanomada group</taxon>
        <taxon>Methanococci</taxon>
        <taxon>Methanococcales</taxon>
        <taxon>Methanococcaceae</taxon>
        <taxon>Methanococcus</taxon>
    </lineage>
</organism>
<feature type="chain" id="PRO_1000025472" description="tRNA (pseudouridine(54)-N(1))-methyltransferase">
    <location>
        <begin position="1"/>
        <end position="198"/>
    </location>
</feature>
<feature type="binding site" evidence="1">
    <location>
        <position position="130"/>
    </location>
    <ligand>
        <name>S-adenosyl-L-methionine</name>
        <dbReference type="ChEBI" id="CHEBI:59789"/>
    </ligand>
</feature>
<feature type="binding site" evidence="1">
    <location>
        <position position="153"/>
    </location>
    <ligand>
        <name>S-adenosyl-L-methionine</name>
        <dbReference type="ChEBI" id="CHEBI:59789"/>
    </ligand>
</feature>
<feature type="binding site" evidence="1">
    <location>
        <begin position="176"/>
        <end position="181"/>
    </location>
    <ligand>
        <name>S-adenosyl-L-methionine</name>
        <dbReference type="ChEBI" id="CHEBI:59789"/>
    </ligand>
</feature>
<feature type="binding site" evidence="1">
    <location>
        <position position="186"/>
    </location>
    <ligand>
        <name>S-adenosyl-L-methionine</name>
        <dbReference type="ChEBI" id="CHEBI:59789"/>
    </ligand>
</feature>
<sequence>MKEFIIKANKAVTNGEINLKDLPGSSGRLDLICRCVNSAFFLSHDLRRDTIFYSVNYGNPNPPVALKFIGDELKRLSPDERSIAMFIQKALSKDASEIWKESTSGIYYSNHEFKEIILEKKNSGKKIFYLHLNGKPLENFDFKNESDVVFILGDHIGLSKEDEEFLEEIGAEQISLSPLELHADHCIILVHNVLDRLK</sequence>
<gene>
    <name evidence="1" type="primary">trmY</name>
    <name type="ordered locus">Mevan_0217</name>
</gene>
<name>TRMY_METVS</name>
<reference key="1">
    <citation type="submission" date="2007-06" db="EMBL/GenBank/DDBJ databases">
        <title>Complete sequence of Methanococcus vannielii SB.</title>
        <authorList>
            <consortium name="US DOE Joint Genome Institute"/>
            <person name="Copeland A."/>
            <person name="Lucas S."/>
            <person name="Lapidus A."/>
            <person name="Barry K."/>
            <person name="Glavina del Rio T."/>
            <person name="Dalin E."/>
            <person name="Tice H."/>
            <person name="Pitluck S."/>
            <person name="Chain P."/>
            <person name="Malfatti S."/>
            <person name="Shin M."/>
            <person name="Vergez L."/>
            <person name="Schmutz J."/>
            <person name="Larimer F."/>
            <person name="Land M."/>
            <person name="Hauser L."/>
            <person name="Kyrpides N."/>
            <person name="Anderson I."/>
            <person name="Sieprawska-Lupa M."/>
            <person name="Whitman W.B."/>
            <person name="Richardson P."/>
        </authorList>
    </citation>
    <scope>NUCLEOTIDE SEQUENCE [LARGE SCALE GENOMIC DNA]</scope>
    <source>
        <strain>ATCC 35089 / DSM 1224 / JCM 13029 / OCM 148 / SB</strain>
    </source>
</reference>
<proteinExistence type="inferred from homology"/>
<evidence type="ECO:0000255" key="1">
    <source>
        <dbReference type="HAMAP-Rule" id="MF_00587"/>
    </source>
</evidence>
<protein>
    <recommendedName>
        <fullName evidence="1">tRNA (pseudouridine(54)-N(1))-methyltransferase</fullName>
        <ecNumber evidence="1">2.1.1.257</ecNumber>
    </recommendedName>
</protein>
<comment type="function">
    <text evidence="1">Specifically catalyzes the N1-methylation of pseudouridine at position 54 (Psi54) in tRNAs.</text>
</comment>
<comment type="catalytic activity">
    <reaction evidence="1">
        <text>pseudouridine(54) in tRNA + S-adenosyl-L-methionine = N(1)-methylpseudouridine(54) in tRNA + S-adenosyl-L-homocysteine + H(+)</text>
        <dbReference type="Rhea" id="RHEA:55292"/>
        <dbReference type="Rhea" id="RHEA-COMP:14140"/>
        <dbReference type="Rhea" id="RHEA-COMP:14141"/>
        <dbReference type="ChEBI" id="CHEBI:15378"/>
        <dbReference type="ChEBI" id="CHEBI:57856"/>
        <dbReference type="ChEBI" id="CHEBI:59789"/>
        <dbReference type="ChEBI" id="CHEBI:65314"/>
        <dbReference type="ChEBI" id="CHEBI:74890"/>
        <dbReference type="EC" id="2.1.1.257"/>
    </reaction>
</comment>
<comment type="subunit">
    <text evidence="1">Homodimer.</text>
</comment>
<comment type="subcellular location">
    <subcellularLocation>
        <location evidence="1">Cytoplasm</location>
    </subcellularLocation>
</comment>
<comment type="similarity">
    <text evidence="1">Belongs to the methyltransferase superfamily. TrmY family.</text>
</comment>
<accession>A6UNQ5</accession>